<organism>
    <name type="scientific">Escherichia coli O7:K1 (strain IAI39 / ExPEC)</name>
    <dbReference type="NCBI Taxonomy" id="585057"/>
    <lineage>
        <taxon>Bacteria</taxon>
        <taxon>Pseudomonadati</taxon>
        <taxon>Pseudomonadota</taxon>
        <taxon>Gammaproteobacteria</taxon>
        <taxon>Enterobacterales</taxon>
        <taxon>Enterobacteriaceae</taxon>
        <taxon>Escherichia</taxon>
    </lineage>
</organism>
<reference key="1">
    <citation type="journal article" date="2009" name="PLoS Genet.">
        <title>Organised genome dynamics in the Escherichia coli species results in highly diverse adaptive paths.</title>
        <authorList>
            <person name="Touchon M."/>
            <person name="Hoede C."/>
            <person name="Tenaillon O."/>
            <person name="Barbe V."/>
            <person name="Baeriswyl S."/>
            <person name="Bidet P."/>
            <person name="Bingen E."/>
            <person name="Bonacorsi S."/>
            <person name="Bouchier C."/>
            <person name="Bouvet O."/>
            <person name="Calteau A."/>
            <person name="Chiapello H."/>
            <person name="Clermont O."/>
            <person name="Cruveiller S."/>
            <person name="Danchin A."/>
            <person name="Diard M."/>
            <person name="Dossat C."/>
            <person name="Karoui M.E."/>
            <person name="Frapy E."/>
            <person name="Garry L."/>
            <person name="Ghigo J.M."/>
            <person name="Gilles A.M."/>
            <person name="Johnson J."/>
            <person name="Le Bouguenec C."/>
            <person name="Lescat M."/>
            <person name="Mangenot S."/>
            <person name="Martinez-Jehanne V."/>
            <person name="Matic I."/>
            <person name="Nassif X."/>
            <person name="Oztas S."/>
            <person name="Petit M.A."/>
            <person name="Pichon C."/>
            <person name="Rouy Z."/>
            <person name="Ruf C.S."/>
            <person name="Schneider D."/>
            <person name="Tourret J."/>
            <person name="Vacherie B."/>
            <person name="Vallenet D."/>
            <person name="Medigue C."/>
            <person name="Rocha E.P.C."/>
            <person name="Denamur E."/>
        </authorList>
    </citation>
    <scope>NUCLEOTIDE SEQUENCE [LARGE SCALE GENOMIC DNA]</scope>
    <source>
        <strain>IAI39 / ExPEC</strain>
    </source>
</reference>
<comment type="function">
    <text evidence="1">Catalyzes the initial step of the lipid cycle reactions in the biosynthesis of the cell wall peptidoglycan: transfers peptidoglycan precursor phospho-MurNAc-pentapeptide from UDP-MurNAc-pentapeptide onto the lipid carrier undecaprenyl phosphate, yielding undecaprenyl-pyrophosphoryl-MurNAc-pentapeptide, known as lipid I.</text>
</comment>
<comment type="catalytic activity">
    <reaction evidence="1">
        <text>UDP-N-acetyl-alpha-D-muramoyl-L-alanyl-gamma-D-glutamyl-meso-2,6-diaminopimeloyl-D-alanyl-D-alanine + di-trans,octa-cis-undecaprenyl phosphate = di-trans,octa-cis-undecaprenyl diphospho-N-acetyl-alpha-D-muramoyl-L-alanyl-D-glutamyl-meso-2,6-diaminopimeloyl-D-alanyl-D-alanine + UMP</text>
        <dbReference type="Rhea" id="RHEA:28386"/>
        <dbReference type="ChEBI" id="CHEBI:57865"/>
        <dbReference type="ChEBI" id="CHEBI:60392"/>
        <dbReference type="ChEBI" id="CHEBI:61386"/>
        <dbReference type="ChEBI" id="CHEBI:61387"/>
        <dbReference type="EC" id="2.7.8.13"/>
    </reaction>
</comment>
<comment type="cofactor">
    <cofactor evidence="1">
        <name>Mg(2+)</name>
        <dbReference type="ChEBI" id="CHEBI:18420"/>
    </cofactor>
</comment>
<comment type="pathway">
    <text evidence="1">Cell wall biogenesis; peptidoglycan biosynthesis.</text>
</comment>
<comment type="subcellular location">
    <subcellularLocation>
        <location evidence="1">Cell inner membrane</location>
        <topology evidence="1">Multi-pass membrane protein</topology>
    </subcellularLocation>
</comment>
<comment type="similarity">
    <text evidence="1">Belongs to the glycosyltransferase 4 family. MraY subfamily.</text>
</comment>
<evidence type="ECO:0000255" key="1">
    <source>
        <dbReference type="HAMAP-Rule" id="MF_00038"/>
    </source>
</evidence>
<accession>B7NHJ3</accession>
<name>MRAY_ECO7I</name>
<feature type="chain" id="PRO_1000116513" description="Phospho-N-acetylmuramoyl-pentapeptide-transferase">
    <location>
        <begin position="1"/>
        <end position="360"/>
    </location>
</feature>
<feature type="topological domain" description="Periplasmic" evidence="1">
    <location>
        <begin position="1"/>
        <end position="25"/>
    </location>
</feature>
<feature type="transmembrane region" description="Helical" evidence="1">
    <location>
        <begin position="26"/>
        <end position="46"/>
    </location>
</feature>
<feature type="topological domain" description="Cytoplasmic" evidence="1">
    <location>
        <begin position="47"/>
        <end position="71"/>
    </location>
</feature>
<feature type="transmembrane region" description="Helical" evidence="1">
    <location>
        <begin position="72"/>
        <end position="92"/>
    </location>
</feature>
<feature type="topological domain" description="Periplasmic" evidence="1">
    <location>
        <position position="93"/>
    </location>
</feature>
<feature type="transmembrane region" description="Helical" evidence="1">
    <location>
        <begin position="94"/>
        <end position="114"/>
    </location>
</feature>
<feature type="topological domain" description="Cytoplasmic" evidence="1">
    <location>
        <begin position="115"/>
        <end position="131"/>
    </location>
</feature>
<feature type="transmembrane region" description="Helical" evidence="1">
    <location>
        <begin position="132"/>
        <end position="152"/>
    </location>
</feature>
<feature type="topological domain" description="Periplasmic" evidence="1">
    <location>
        <begin position="153"/>
        <end position="167"/>
    </location>
</feature>
<feature type="transmembrane region" description="Helical" evidence="1">
    <location>
        <begin position="168"/>
        <end position="188"/>
    </location>
</feature>
<feature type="topological domain" description="Cytoplasmic" evidence="1">
    <location>
        <begin position="189"/>
        <end position="198"/>
    </location>
</feature>
<feature type="transmembrane region" description="Helical" evidence="1">
    <location>
        <begin position="199"/>
        <end position="219"/>
    </location>
</feature>
<feature type="topological domain" description="Periplasmic" evidence="1">
    <location>
        <begin position="220"/>
        <end position="235"/>
    </location>
</feature>
<feature type="transmembrane region" description="Helical" evidence="1">
    <location>
        <begin position="236"/>
        <end position="256"/>
    </location>
</feature>
<feature type="topological domain" description="Cytoplasmic" evidence="1">
    <location>
        <begin position="257"/>
        <end position="262"/>
    </location>
</feature>
<feature type="transmembrane region" description="Helical" evidence="1">
    <location>
        <begin position="263"/>
        <end position="283"/>
    </location>
</feature>
<feature type="topological domain" description="Periplasmic" evidence="1">
    <location>
        <begin position="284"/>
        <end position="287"/>
    </location>
</feature>
<feature type="transmembrane region" description="Helical" evidence="1">
    <location>
        <begin position="288"/>
        <end position="308"/>
    </location>
</feature>
<feature type="topological domain" description="Cytoplasmic" evidence="1">
    <location>
        <begin position="309"/>
        <end position="337"/>
    </location>
</feature>
<feature type="transmembrane region" description="Helical" evidence="1">
    <location>
        <begin position="338"/>
        <end position="358"/>
    </location>
</feature>
<feature type="topological domain" description="Periplasmic" evidence="1">
    <location>
        <begin position="359"/>
        <end position="360"/>
    </location>
</feature>
<proteinExistence type="inferred from homology"/>
<gene>
    <name evidence="1" type="primary">mraY</name>
    <name type="ordered locus">ECIAI39_0090</name>
</gene>
<dbReference type="EC" id="2.7.8.13" evidence="1"/>
<dbReference type="EMBL" id="CU928164">
    <property type="protein sequence ID" value="CAR16231.1"/>
    <property type="molecule type" value="Genomic_DNA"/>
</dbReference>
<dbReference type="RefSeq" id="WP_000964122.1">
    <property type="nucleotide sequence ID" value="NC_011750.1"/>
</dbReference>
<dbReference type="RefSeq" id="YP_002406139.1">
    <property type="nucleotide sequence ID" value="NC_011750.1"/>
</dbReference>
<dbReference type="SMR" id="B7NHJ3"/>
<dbReference type="STRING" id="585057.ECIAI39_0090"/>
<dbReference type="GeneID" id="86862597"/>
<dbReference type="KEGG" id="ect:ECIAI39_0090"/>
<dbReference type="PATRIC" id="fig|585057.6.peg.99"/>
<dbReference type="HOGENOM" id="CLU_023982_0_0_6"/>
<dbReference type="UniPathway" id="UPA00219"/>
<dbReference type="Proteomes" id="UP000000749">
    <property type="component" value="Chromosome"/>
</dbReference>
<dbReference type="GO" id="GO:0005886">
    <property type="term" value="C:plasma membrane"/>
    <property type="evidence" value="ECO:0007669"/>
    <property type="project" value="UniProtKB-SubCell"/>
</dbReference>
<dbReference type="GO" id="GO:0046872">
    <property type="term" value="F:metal ion binding"/>
    <property type="evidence" value="ECO:0007669"/>
    <property type="project" value="UniProtKB-KW"/>
</dbReference>
<dbReference type="GO" id="GO:0008963">
    <property type="term" value="F:phospho-N-acetylmuramoyl-pentapeptide-transferase activity"/>
    <property type="evidence" value="ECO:0007669"/>
    <property type="project" value="UniProtKB-UniRule"/>
</dbReference>
<dbReference type="GO" id="GO:0051992">
    <property type="term" value="F:UDP-N-acetylmuramoyl-L-alanyl-D-glutamyl-meso-2,6-diaminopimelyl-D-alanyl-D-alanine:undecaprenyl-phosphate transferase activity"/>
    <property type="evidence" value="ECO:0007669"/>
    <property type="project" value="RHEA"/>
</dbReference>
<dbReference type="GO" id="GO:0051301">
    <property type="term" value="P:cell division"/>
    <property type="evidence" value="ECO:0007669"/>
    <property type="project" value="UniProtKB-KW"/>
</dbReference>
<dbReference type="GO" id="GO:0071555">
    <property type="term" value="P:cell wall organization"/>
    <property type="evidence" value="ECO:0007669"/>
    <property type="project" value="UniProtKB-KW"/>
</dbReference>
<dbReference type="GO" id="GO:0009252">
    <property type="term" value="P:peptidoglycan biosynthetic process"/>
    <property type="evidence" value="ECO:0007669"/>
    <property type="project" value="UniProtKB-UniRule"/>
</dbReference>
<dbReference type="GO" id="GO:0008360">
    <property type="term" value="P:regulation of cell shape"/>
    <property type="evidence" value="ECO:0007669"/>
    <property type="project" value="UniProtKB-KW"/>
</dbReference>
<dbReference type="CDD" id="cd06852">
    <property type="entry name" value="GT_MraY"/>
    <property type="match status" value="1"/>
</dbReference>
<dbReference type="HAMAP" id="MF_00038">
    <property type="entry name" value="MraY"/>
    <property type="match status" value="1"/>
</dbReference>
<dbReference type="InterPro" id="IPR000715">
    <property type="entry name" value="Glycosyl_transferase_4"/>
</dbReference>
<dbReference type="InterPro" id="IPR003524">
    <property type="entry name" value="PNAcMuramoyl-5peptid_Trfase"/>
</dbReference>
<dbReference type="InterPro" id="IPR018480">
    <property type="entry name" value="PNAcMuramoyl-5peptid_Trfase_CS"/>
</dbReference>
<dbReference type="NCBIfam" id="TIGR00445">
    <property type="entry name" value="mraY"/>
    <property type="match status" value="1"/>
</dbReference>
<dbReference type="PANTHER" id="PTHR22926">
    <property type="entry name" value="PHOSPHO-N-ACETYLMURAMOYL-PENTAPEPTIDE-TRANSFERASE"/>
    <property type="match status" value="1"/>
</dbReference>
<dbReference type="PANTHER" id="PTHR22926:SF5">
    <property type="entry name" value="PHOSPHO-N-ACETYLMURAMOYL-PENTAPEPTIDE-TRANSFERASE HOMOLOG"/>
    <property type="match status" value="1"/>
</dbReference>
<dbReference type="Pfam" id="PF00953">
    <property type="entry name" value="Glycos_transf_4"/>
    <property type="match status" value="1"/>
</dbReference>
<dbReference type="Pfam" id="PF10555">
    <property type="entry name" value="MraY_sig1"/>
    <property type="match status" value="1"/>
</dbReference>
<dbReference type="PROSITE" id="PS01347">
    <property type="entry name" value="MRAY_1"/>
    <property type="match status" value="1"/>
</dbReference>
<dbReference type="PROSITE" id="PS01348">
    <property type="entry name" value="MRAY_2"/>
    <property type="match status" value="1"/>
</dbReference>
<keyword id="KW-0131">Cell cycle</keyword>
<keyword id="KW-0132">Cell division</keyword>
<keyword id="KW-0997">Cell inner membrane</keyword>
<keyword id="KW-1003">Cell membrane</keyword>
<keyword id="KW-0133">Cell shape</keyword>
<keyword id="KW-0961">Cell wall biogenesis/degradation</keyword>
<keyword id="KW-0460">Magnesium</keyword>
<keyword id="KW-0472">Membrane</keyword>
<keyword id="KW-0479">Metal-binding</keyword>
<keyword id="KW-0573">Peptidoglycan synthesis</keyword>
<keyword id="KW-0808">Transferase</keyword>
<keyword id="KW-0812">Transmembrane</keyword>
<keyword id="KW-1133">Transmembrane helix</keyword>
<protein>
    <recommendedName>
        <fullName evidence="1">Phospho-N-acetylmuramoyl-pentapeptide-transferase</fullName>
        <ecNumber evidence="1">2.7.8.13</ecNumber>
    </recommendedName>
    <alternativeName>
        <fullName evidence="1">UDP-MurNAc-pentapeptide phosphotransferase</fullName>
    </alternativeName>
</protein>
<sequence>MLVWLAEHLVKYYSGFNVFSYLTFRAIVSLLTALFISLWMGPRMIAHLQKLSFGQVVRNDGPESHFSKRGTPTMGGIMILTAIVISVLLWAYPSNPYVWCVLVVLVGYGIIGFVDDYRKVVRKDTKGLIARWKYFWMSVIALGVAFALYLAGKDTPATQLVVPFFKDVMPQLGLFYILLAYFVIVGTGNAVNLTDGLDGLAIMPTVFVAGGFALVAWATGNMNFASYLHIPYLRHAGELVIVCTAIVGAGLGFLWFNTYPAQVFMGDVGSLALGGALGIIAVLLRQEFLLVIMGGVFVVETLSVILQVGSFKLRGQRIFRMAPIHHHYELKGWPEPRVIVRFWIISLMLVLIGLATLKVR</sequence>